<sequence length="128" mass="13897">MGKTLMALITAALLSTSSLVMAASVADDMETIAEHYGKVLKADSTAVIKQDLQAMRVAAVDAQKGIPTKLKSKVEDSPEMKDFRHGMDVLIGEIDGALALADQGKLDEAKQAAQDFKDTRNTYHKKYR</sequence>
<organism>
    <name type="scientific">Yersinia pestis</name>
    <dbReference type="NCBI Taxonomy" id="632"/>
    <lineage>
        <taxon>Bacteria</taxon>
        <taxon>Pseudomonadati</taxon>
        <taxon>Pseudomonadota</taxon>
        <taxon>Gammaproteobacteria</taxon>
        <taxon>Enterobacterales</taxon>
        <taxon>Yersiniaceae</taxon>
        <taxon>Yersinia</taxon>
    </lineage>
</organism>
<comment type="function">
    <text evidence="1">Electron-transport protein of unknown function.</text>
</comment>
<comment type="cofactor">
    <cofactor evidence="1">
        <name>heme b</name>
        <dbReference type="ChEBI" id="CHEBI:60344"/>
    </cofactor>
    <text evidence="1">Binds 1 heme b (iron(II)-protoporphyrin IX) group per molecule.</text>
</comment>
<comment type="subcellular location">
    <subcellularLocation>
        <location evidence="1">Periplasm</location>
    </subcellularLocation>
</comment>
<comment type="similarity">
    <text evidence="3">Belongs to the cytochrome b562 family.</text>
</comment>
<comment type="sequence caution" evidence="3">
    <conflict type="erroneous initiation">
        <sequence resource="EMBL-CDS" id="AAM83763"/>
    </conflict>
</comment>
<comment type="sequence caution" evidence="3">
    <conflict type="erroneous initiation">
        <sequence resource="EMBL-CDS" id="AAS63996"/>
    </conflict>
</comment>
<gene>
    <name type="primary">cybC2</name>
    <name type="synonym">cybC</name>
    <name type="ordered locus">YPO3694</name>
    <name type="ordered locus">y0169</name>
    <name type="ordered locus">YP_3850</name>
</gene>
<protein>
    <recommendedName>
        <fullName>Probable soluble cytochrome b562 2</fullName>
        <shortName>Cytochrome b-562 2</shortName>
    </recommendedName>
</protein>
<proteinExistence type="inferred from homology"/>
<reference key="1">
    <citation type="journal article" date="2001" name="Nature">
        <title>Genome sequence of Yersinia pestis, the causative agent of plague.</title>
        <authorList>
            <person name="Parkhill J."/>
            <person name="Wren B.W."/>
            <person name="Thomson N.R."/>
            <person name="Titball R.W."/>
            <person name="Holden M.T.G."/>
            <person name="Prentice M.B."/>
            <person name="Sebaihia M."/>
            <person name="James K.D."/>
            <person name="Churcher C.M."/>
            <person name="Mungall K.L."/>
            <person name="Baker S."/>
            <person name="Basham D."/>
            <person name="Bentley S.D."/>
            <person name="Brooks K."/>
            <person name="Cerdeno-Tarraga A.-M."/>
            <person name="Chillingworth T."/>
            <person name="Cronin A."/>
            <person name="Davies R.M."/>
            <person name="Davis P."/>
            <person name="Dougan G."/>
            <person name="Feltwell T."/>
            <person name="Hamlin N."/>
            <person name="Holroyd S."/>
            <person name="Jagels K."/>
            <person name="Karlyshev A.V."/>
            <person name="Leather S."/>
            <person name="Moule S."/>
            <person name="Oyston P.C.F."/>
            <person name="Quail M.A."/>
            <person name="Rutherford K.M."/>
            <person name="Simmonds M."/>
            <person name="Skelton J."/>
            <person name="Stevens K."/>
            <person name="Whitehead S."/>
            <person name="Barrell B.G."/>
        </authorList>
    </citation>
    <scope>NUCLEOTIDE SEQUENCE [LARGE SCALE GENOMIC DNA]</scope>
    <source>
        <strain>CO-92 / Biovar Orientalis</strain>
    </source>
</reference>
<reference key="2">
    <citation type="journal article" date="2002" name="J. Bacteriol.">
        <title>Genome sequence of Yersinia pestis KIM.</title>
        <authorList>
            <person name="Deng W."/>
            <person name="Burland V."/>
            <person name="Plunkett G. III"/>
            <person name="Boutin A."/>
            <person name="Mayhew G.F."/>
            <person name="Liss P."/>
            <person name="Perna N.T."/>
            <person name="Rose D.J."/>
            <person name="Mau B."/>
            <person name="Zhou S."/>
            <person name="Schwartz D.C."/>
            <person name="Fetherston J.D."/>
            <person name="Lindler L.E."/>
            <person name="Brubaker R.R."/>
            <person name="Plano G.V."/>
            <person name="Straley S.C."/>
            <person name="McDonough K.A."/>
            <person name="Nilles M.L."/>
            <person name="Matson J.S."/>
            <person name="Blattner F.R."/>
            <person name="Perry R.D."/>
        </authorList>
    </citation>
    <scope>NUCLEOTIDE SEQUENCE [LARGE SCALE GENOMIC DNA]</scope>
    <source>
        <strain>KIM10+ / Biovar Mediaevalis</strain>
    </source>
</reference>
<reference key="3">
    <citation type="journal article" date="2004" name="DNA Res.">
        <title>Complete genome sequence of Yersinia pestis strain 91001, an isolate avirulent to humans.</title>
        <authorList>
            <person name="Song Y."/>
            <person name="Tong Z."/>
            <person name="Wang J."/>
            <person name="Wang L."/>
            <person name="Guo Z."/>
            <person name="Han Y."/>
            <person name="Zhang J."/>
            <person name="Pei D."/>
            <person name="Zhou D."/>
            <person name="Qin H."/>
            <person name="Pang X."/>
            <person name="Han Y."/>
            <person name="Zhai J."/>
            <person name="Li M."/>
            <person name="Cui B."/>
            <person name="Qi Z."/>
            <person name="Jin L."/>
            <person name="Dai R."/>
            <person name="Chen F."/>
            <person name="Li S."/>
            <person name="Ye C."/>
            <person name="Du Z."/>
            <person name="Lin W."/>
            <person name="Wang J."/>
            <person name="Yu J."/>
            <person name="Yang H."/>
            <person name="Wang J."/>
            <person name="Huang P."/>
            <person name="Yang R."/>
        </authorList>
    </citation>
    <scope>NUCLEOTIDE SEQUENCE [LARGE SCALE GENOMIC DNA]</scope>
    <source>
        <strain>91001 / Biovar Mediaevalis</strain>
    </source>
</reference>
<evidence type="ECO:0000250" key="1"/>
<evidence type="ECO:0000255" key="2"/>
<evidence type="ECO:0000305" key="3"/>
<name>C5622_YERPE</name>
<accession>Q8ZAU2</accession>
<accession>Q0WAW2</accession>
<feature type="signal peptide" evidence="2">
    <location>
        <begin position="1"/>
        <end position="22"/>
    </location>
</feature>
<feature type="chain" id="PRO_0000003644" description="Probable soluble cytochrome b562 2">
    <location>
        <begin position="23"/>
        <end position="128"/>
    </location>
</feature>
<feature type="binding site" description="axial binding residue" evidence="1">
    <location>
        <position position="29"/>
    </location>
    <ligand>
        <name>heme b</name>
        <dbReference type="ChEBI" id="CHEBI:60344"/>
    </ligand>
    <ligandPart>
        <name>Fe</name>
        <dbReference type="ChEBI" id="CHEBI:18248"/>
    </ligandPart>
</feature>
<feature type="binding site" description="axial binding residue" evidence="1">
    <location>
        <position position="124"/>
    </location>
    <ligand>
        <name>heme b</name>
        <dbReference type="ChEBI" id="CHEBI:60344"/>
    </ligand>
    <ligandPart>
        <name>Fe</name>
        <dbReference type="ChEBI" id="CHEBI:18248"/>
    </ligandPart>
</feature>
<dbReference type="EMBL" id="AL590842">
    <property type="protein sequence ID" value="CAL22281.1"/>
    <property type="molecule type" value="Genomic_DNA"/>
</dbReference>
<dbReference type="EMBL" id="AE009952">
    <property type="protein sequence ID" value="AAM83763.1"/>
    <property type="status" value="ALT_INIT"/>
    <property type="molecule type" value="Genomic_DNA"/>
</dbReference>
<dbReference type="EMBL" id="AE017042">
    <property type="protein sequence ID" value="AAS63996.1"/>
    <property type="status" value="ALT_INIT"/>
    <property type="molecule type" value="Genomic_DNA"/>
</dbReference>
<dbReference type="PIR" id="AF0449">
    <property type="entry name" value="AF0449"/>
</dbReference>
<dbReference type="RefSeq" id="WP_002210102.1">
    <property type="nucleotide sequence ID" value="NZ_WUCM01000032.1"/>
</dbReference>
<dbReference type="RefSeq" id="YP_002348576.1">
    <property type="nucleotide sequence ID" value="NC_003143.1"/>
</dbReference>
<dbReference type="SMR" id="Q8ZAU2"/>
<dbReference type="STRING" id="214092.YPO3694"/>
<dbReference type="PaxDb" id="214092-YPO3694"/>
<dbReference type="DNASU" id="1145116"/>
<dbReference type="EnsemblBacteria" id="AAS63996">
    <property type="protein sequence ID" value="AAS63996"/>
    <property type="gene ID" value="YP_3850"/>
</dbReference>
<dbReference type="GeneID" id="57975118"/>
<dbReference type="KEGG" id="ype:YPO3694"/>
<dbReference type="KEGG" id="ypk:y0169"/>
<dbReference type="KEGG" id="ypm:YP_3850"/>
<dbReference type="PATRIC" id="fig|214092.21.peg.4203"/>
<dbReference type="eggNOG" id="COG3783">
    <property type="taxonomic scope" value="Bacteria"/>
</dbReference>
<dbReference type="HOGENOM" id="CLU_140814_1_1_6"/>
<dbReference type="OMA" id="ATRNENH"/>
<dbReference type="OrthoDB" id="6539015at2"/>
<dbReference type="Proteomes" id="UP000000815">
    <property type="component" value="Chromosome"/>
</dbReference>
<dbReference type="Proteomes" id="UP000001019">
    <property type="component" value="Chromosome"/>
</dbReference>
<dbReference type="Proteomes" id="UP000002490">
    <property type="component" value="Chromosome"/>
</dbReference>
<dbReference type="GO" id="GO:0042597">
    <property type="term" value="C:periplasmic space"/>
    <property type="evidence" value="ECO:0007669"/>
    <property type="project" value="UniProtKB-SubCell"/>
</dbReference>
<dbReference type="GO" id="GO:0009055">
    <property type="term" value="F:electron transfer activity"/>
    <property type="evidence" value="ECO:0007669"/>
    <property type="project" value="InterPro"/>
</dbReference>
<dbReference type="GO" id="GO:0020037">
    <property type="term" value="F:heme binding"/>
    <property type="evidence" value="ECO:0007669"/>
    <property type="project" value="InterPro"/>
</dbReference>
<dbReference type="GO" id="GO:0005506">
    <property type="term" value="F:iron ion binding"/>
    <property type="evidence" value="ECO:0007669"/>
    <property type="project" value="InterPro"/>
</dbReference>
<dbReference type="GO" id="GO:0022900">
    <property type="term" value="P:electron transport chain"/>
    <property type="evidence" value="ECO:0007669"/>
    <property type="project" value="InterPro"/>
</dbReference>
<dbReference type="Gene3D" id="1.20.120.10">
    <property type="entry name" value="Cytochrome c/b562"/>
    <property type="match status" value="1"/>
</dbReference>
<dbReference type="InterPro" id="IPR009155">
    <property type="entry name" value="Cyt_b562"/>
</dbReference>
<dbReference type="InterPro" id="IPR010980">
    <property type="entry name" value="Cyt_c/b562"/>
</dbReference>
<dbReference type="NCBIfam" id="NF011632">
    <property type="entry name" value="PRK15058.1"/>
    <property type="match status" value="1"/>
</dbReference>
<dbReference type="Pfam" id="PF07361">
    <property type="entry name" value="Cytochrom_B562"/>
    <property type="match status" value="1"/>
</dbReference>
<dbReference type="PIRSF" id="PIRSF000029">
    <property type="entry name" value="Cytochrome_b562"/>
    <property type="match status" value="1"/>
</dbReference>
<dbReference type="SUPFAM" id="SSF47175">
    <property type="entry name" value="Cytochromes"/>
    <property type="match status" value="1"/>
</dbReference>
<keyword id="KW-0249">Electron transport</keyword>
<keyword id="KW-0349">Heme</keyword>
<keyword id="KW-0408">Iron</keyword>
<keyword id="KW-0479">Metal-binding</keyword>
<keyword id="KW-0574">Periplasm</keyword>
<keyword id="KW-1185">Reference proteome</keyword>
<keyword id="KW-0732">Signal</keyword>
<keyword id="KW-0813">Transport</keyword>